<evidence type="ECO:0000255" key="1">
    <source>
        <dbReference type="PROSITE-ProRule" id="PRU00102"/>
    </source>
</evidence>
<evidence type="ECO:0000255" key="2">
    <source>
        <dbReference type="PROSITE-ProRule" id="PRU00284"/>
    </source>
</evidence>
<evidence type="ECO:0000256" key="3">
    <source>
        <dbReference type="SAM" id="MobiDB-lite"/>
    </source>
</evidence>
<evidence type="ECO:0000305" key="4"/>
<evidence type="ECO:0007829" key="5">
    <source>
        <dbReference type="PDB" id="2F93"/>
    </source>
</evidence>
<evidence type="ECO:0007829" key="6">
    <source>
        <dbReference type="PDB" id="2RM8"/>
    </source>
</evidence>
<evidence type="ECO:0007829" key="7">
    <source>
        <dbReference type="PDB" id="5JJE"/>
    </source>
</evidence>
<name>HTR2_NATPH</name>
<keyword id="KW-0002">3D-structure</keyword>
<keyword id="KW-1003">Cell membrane</keyword>
<keyword id="KW-0145">Chemotaxis</keyword>
<keyword id="KW-0157">Chromophore</keyword>
<keyword id="KW-0472">Membrane</keyword>
<keyword id="KW-0488">Methylation</keyword>
<keyword id="KW-0600">Photoreceptor protein</keyword>
<keyword id="KW-0675">Receptor</keyword>
<keyword id="KW-0677">Repeat</keyword>
<keyword id="KW-0716">Sensory transduction</keyword>
<keyword id="KW-0807">Transducer</keyword>
<keyword id="KW-0812">Transmembrane</keyword>
<keyword id="KW-1133">Transmembrane helix</keyword>
<feature type="chain" id="PRO_0000110555" description="Sensory rhodopsin II transducer">
    <location>
        <begin position="1"/>
        <end position="534"/>
    </location>
</feature>
<feature type="topological domain" description="Cytoplasmic">
    <location>
        <begin position="1"/>
        <end position="22"/>
    </location>
</feature>
<feature type="transmembrane region" description="Helical; Name=1">
    <location>
        <begin position="23"/>
        <end position="43"/>
    </location>
</feature>
<feature type="topological domain" description="Extracellular">
    <location>
        <begin position="44"/>
        <end position="59"/>
    </location>
</feature>
<feature type="transmembrane region" description="Helical; Name=2">
    <location>
        <begin position="60"/>
        <end position="81"/>
    </location>
</feature>
<feature type="topological domain" description="Cytoplasmic">
    <location>
        <begin position="82"/>
        <end position="534"/>
    </location>
</feature>
<feature type="domain" description="HAMP 1" evidence="1">
    <location>
        <begin position="84"/>
        <end position="136"/>
    </location>
</feature>
<feature type="domain" description="HAMP 2" evidence="1">
    <location>
        <begin position="157"/>
        <end position="210"/>
    </location>
</feature>
<feature type="domain" description="Methyl-accepting transducer" evidence="2">
    <location>
        <begin position="229"/>
        <end position="465"/>
    </location>
</feature>
<feature type="region of interest" description="Disordered" evidence="3">
    <location>
        <begin position="463"/>
        <end position="534"/>
    </location>
</feature>
<feature type="compositionally biased region" description="Low complexity" evidence="3">
    <location>
        <begin position="463"/>
        <end position="487"/>
    </location>
</feature>
<feature type="compositionally biased region" description="Polar residues" evidence="3">
    <location>
        <begin position="502"/>
        <end position="512"/>
    </location>
</feature>
<feature type="compositionally biased region" description="Acidic residues" evidence="3">
    <location>
        <begin position="516"/>
        <end position="525"/>
    </location>
</feature>
<feature type="helix" evidence="7">
    <location>
        <begin position="23"/>
        <end position="48"/>
    </location>
</feature>
<feature type="turn" evidence="5">
    <location>
        <begin position="49"/>
        <end position="51"/>
    </location>
</feature>
<feature type="helix" evidence="7">
    <location>
        <begin position="53"/>
        <end position="82"/>
    </location>
</feature>
<feature type="turn" evidence="6">
    <location>
        <begin position="107"/>
        <end position="109"/>
    </location>
</feature>
<feature type="strand" evidence="6">
    <location>
        <begin position="118"/>
        <end position="120"/>
    </location>
</feature>
<feature type="turn" evidence="6">
    <location>
        <begin position="124"/>
        <end position="126"/>
    </location>
</feature>
<feature type="helix" evidence="6">
    <location>
        <begin position="127"/>
        <end position="130"/>
    </location>
</feature>
<feature type="helix" evidence="6">
    <location>
        <begin position="135"/>
        <end position="150"/>
    </location>
</feature>
<feature type="helix" evidence="6">
    <location>
        <begin position="151"/>
        <end position="153"/>
    </location>
</feature>
<feature type="helix" evidence="6">
    <location>
        <begin position="157"/>
        <end position="159"/>
    </location>
</feature>
<comment type="function">
    <text>Transduces signals from the phototaxis receptor sensory rhodopsin II (SR-II) to the flagellar motor. Responds to light changes through the variation of the level of methylation. Also acts as a chemotransducer.</text>
</comment>
<comment type="interaction">
    <interactant intactId="EBI-1034515">
        <id>P42259</id>
    </interactant>
    <interactant intactId="EBI-1034515">
        <id>P42259</id>
        <label>htr2</label>
    </interactant>
    <organismsDiffer>false</organismsDiffer>
    <experiments>3</experiments>
</comment>
<comment type="interaction">
    <interactant intactId="EBI-1034515">
        <id>P42259</id>
    </interactant>
    <interactant intactId="EBI-1034509">
        <id>P42196</id>
        <label>sop2</label>
    </interactant>
    <organismsDiffer>false</organismsDiffer>
    <experiments>5</experiments>
</comment>
<comment type="interaction">
    <interactant intactId="EBI-1034515">
        <id>P42259</id>
    </interactant>
    <interactant intactId="EBI-7339190">
        <id>A0A1U7EZ03</id>
        <label>sopII</label>
    </interactant>
    <organismsDiffer>true</organismsDiffer>
    <experiments>2</experiments>
</comment>
<comment type="subcellular location">
    <subcellularLocation>
        <location>Cell membrane</location>
        <topology>Multi-pass membrane protein</topology>
    </subcellularLocation>
</comment>
<comment type="similarity">
    <text evidence="4">Belongs to the methyl-accepting chemotaxis (MCP) protein family.</text>
</comment>
<dbReference type="EMBL" id="Z35086">
    <property type="protein sequence ID" value="CAA84468.1"/>
    <property type="molecule type" value="Genomic_DNA"/>
</dbReference>
<dbReference type="PIR" id="S55299">
    <property type="entry name" value="S55299"/>
</dbReference>
<dbReference type="PDB" id="1H2S">
    <property type="method" value="X-ray"/>
    <property type="resolution" value="1.93 A"/>
    <property type="chains" value="B=23-82"/>
</dbReference>
<dbReference type="PDB" id="2F93">
    <property type="method" value="X-ray"/>
    <property type="resolution" value="2.00 A"/>
    <property type="chains" value="B=3-114"/>
</dbReference>
<dbReference type="PDB" id="2F95">
    <property type="method" value="X-ray"/>
    <property type="resolution" value="2.20 A"/>
    <property type="chains" value="B=5-157"/>
</dbReference>
<dbReference type="PDB" id="2RM8">
    <property type="method" value="NMR"/>
    <property type="chains" value="A=100-159"/>
</dbReference>
<dbReference type="PDB" id="4GYC">
    <property type="method" value="X-ray"/>
    <property type="resolution" value="2.05 A"/>
    <property type="chains" value="B=1-135"/>
</dbReference>
<dbReference type="PDB" id="5JJE">
    <property type="method" value="X-ray"/>
    <property type="resolution" value="1.90 A"/>
    <property type="chains" value="B=5-157"/>
</dbReference>
<dbReference type="PDB" id="5JJF">
    <property type="method" value="X-ray"/>
    <property type="resolution" value="1.90 A"/>
    <property type="chains" value="B=5-157"/>
</dbReference>
<dbReference type="PDB" id="5JJJ">
    <property type="method" value="X-ray"/>
    <property type="resolution" value="2.50 A"/>
    <property type="chains" value="B=5-137"/>
</dbReference>
<dbReference type="PDB" id="5JJN">
    <property type="method" value="X-ray"/>
    <property type="resolution" value="2.25 A"/>
    <property type="chains" value="B/D=5-137"/>
</dbReference>
<dbReference type="PDB" id="7ZCM">
    <property type="method" value="X-ray"/>
    <property type="resolution" value="2.85 A"/>
    <property type="chains" value="B=19-82"/>
</dbReference>
<dbReference type="PDBsum" id="1H2S"/>
<dbReference type="PDBsum" id="2F93"/>
<dbReference type="PDBsum" id="2F95"/>
<dbReference type="PDBsum" id="2RM8"/>
<dbReference type="PDBsum" id="4GYC"/>
<dbReference type="PDBsum" id="5JJE"/>
<dbReference type="PDBsum" id="5JJF"/>
<dbReference type="PDBsum" id="5JJJ"/>
<dbReference type="PDBsum" id="5JJN"/>
<dbReference type="PDBsum" id="7ZCM"/>
<dbReference type="BMRB" id="P42259"/>
<dbReference type="SASBDB" id="P42259"/>
<dbReference type="SMR" id="P42259"/>
<dbReference type="DIP" id="DIP-35283N"/>
<dbReference type="IntAct" id="P42259">
    <property type="interactions" value="2"/>
</dbReference>
<dbReference type="MINT" id="P42259"/>
<dbReference type="EvolutionaryTrace" id="P42259"/>
<dbReference type="GO" id="GO:0005886">
    <property type="term" value="C:plasma membrane"/>
    <property type="evidence" value="ECO:0007669"/>
    <property type="project" value="UniProtKB-SubCell"/>
</dbReference>
<dbReference type="GO" id="GO:0042802">
    <property type="term" value="F:identical protein binding"/>
    <property type="evidence" value="ECO:0000353"/>
    <property type="project" value="IntAct"/>
</dbReference>
<dbReference type="GO" id="GO:0009881">
    <property type="term" value="F:photoreceptor activity"/>
    <property type="evidence" value="ECO:0007669"/>
    <property type="project" value="UniProtKB-KW"/>
</dbReference>
<dbReference type="GO" id="GO:0004888">
    <property type="term" value="F:transmembrane signaling receptor activity"/>
    <property type="evidence" value="ECO:0007669"/>
    <property type="project" value="InterPro"/>
</dbReference>
<dbReference type="GO" id="GO:0006935">
    <property type="term" value="P:chemotaxis"/>
    <property type="evidence" value="ECO:0007669"/>
    <property type="project" value="UniProtKB-KW"/>
</dbReference>
<dbReference type="GO" id="GO:0007165">
    <property type="term" value="P:signal transduction"/>
    <property type="evidence" value="ECO:0007669"/>
    <property type="project" value="UniProtKB-KW"/>
</dbReference>
<dbReference type="CDD" id="cd06225">
    <property type="entry name" value="HAMP"/>
    <property type="match status" value="1"/>
</dbReference>
<dbReference type="CDD" id="cd11386">
    <property type="entry name" value="MCP_signal"/>
    <property type="match status" value="1"/>
</dbReference>
<dbReference type="Gene3D" id="6.10.250.1910">
    <property type="match status" value="1"/>
</dbReference>
<dbReference type="Gene3D" id="1.10.287.470">
    <property type="entry name" value="Helix hairpin bin"/>
    <property type="match status" value="1"/>
</dbReference>
<dbReference type="Gene3D" id="1.10.287.950">
    <property type="entry name" value="Methyl-accepting chemotaxis protein"/>
    <property type="match status" value="1"/>
</dbReference>
<dbReference type="InterPro" id="IPR004090">
    <property type="entry name" value="Chemotax_Me-accpt_rcpt"/>
</dbReference>
<dbReference type="InterPro" id="IPR003660">
    <property type="entry name" value="HAMP_dom"/>
</dbReference>
<dbReference type="InterPro" id="IPR040913">
    <property type="entry name" value="Htr2"/>
</dbReference>
<dbReference type="InterPro" id="IPR004089">
    <property type="entry name" value="MCPsignal_dom"/>
</dbReference>
<dbReference type="PANTHER" id="PTHR32089:SF112">
    <property type="entry name" value="LYSOZYME-LIKE PROTEIN-RELATED"/>
    <property type="match status" value="1"/>
</dbReference>
<dbReference type="PANTHER" id="PTHR32089">
    <property type="entry name" value="METHYL-ACCEPTING CHEMOTAXIS PROTEIN MCPB"/>
    <property type="match status" value="1"/>
</dbReference>
<dbReference type="Pfam" id="PF00672">
    <property type="entry name" value="HAMP"/>
    <property type="match status" value="1"/>
</dbReference>
<dbReference type="Pfam" id="PF17909">
    <property type="entry name" value="Htr2"/>
    <property type="match status" value="1"/>
</dbReference>
<dbReference type="Pfam" id="PF00015">
    <property type="entry name" value="MCPsignal"/>
    <property type="match status" value="1"/>
</dbReference>
<dbReference type="PRINTS" id="PR00260">
    <property type="entry name" value="CHEMTRNSDUCR"/>
</dbReference>
<dbReference type="SMART" id="SM00304">
    <property type="entry name" value="HAMP"/>
    <property type="match status" value="2"/>
</dbReference>
<dbReference type="SMART" id="SM00283">
    <property type="entry name" value="MA"/>
    <property type="match status" value="1"/>
</dbReference>
<dbReference type="SUPFAM" id="SSF158472">
    <property type="entry name" value="HAMP domain-like"/>
    <property type="match status" value="1"/>
</dbReference>
<dbReference type="SUPFAM" id="SSF158212">
    <property type="entry name" value="Htr2 transmembrane domain-like"/>
    <property type="match status" value="1"/>
</dbReference>
<dbReference type="SUPFAM" id="SSF58104">
    <property type="entry name" value="Methyl-accepting chemotaxis protein (MCP) signaling domain"/>
    <property type="match status" value="1"/>
</dbReference>
<dbReference type="PROSITE" id="PS50111">
    <property type="entry name" value="CHEMOTAXIS_TRANSDUC_2"/>
    <property type="match status" value="1"/>
</dbReference>
<dbReference type="PROSITE" id="PS50885">
    <property type="entry name" value="HAMP"/>
    <property type="match status" value="2"/>
</dbReference>
<reference key="1">
    <citation type="journal article" date="1995" name="Proc. Natl. Acad. Sci. U.S.A.">
        <title>The primary structure of sensory rhodopsin II: a member of an additional retinal protein subgroup is coexpressed with its transducer, the halobacterial transducer of rhodopsin II.</title>
        <authorList>
            <person name="Seidel R."/>
            <person name="Scharf B."/>
            <person name="Gautel M."/>
            <person name="Kleine K."/>
            <person name="Oesterhelt D."/>
            <person name="Engelhard M."/>
        </authorList>
    </citation>
    <scope>NUCLEOTIDE SEQUENCE [GENOMIC DNA]</scope>
    <source>
        <strain>SP-1 / 28</strain>
    </source>
</reference>
<reference key="2">
    <citation type="journal article" date="2002" name="Nature">
        <title>Molecular basis of transmembrane signalling by sensory rhodopsin II-transducer complex.</title>
        <authorList>
            <person name="Gordeliy V.I."/>
            <person name="Labahn J."/>
            <person name="Moukhametzianov R."/>
            <person name="Efremov R."/>
            <person name="Granzin J."/>
            <person name="Schlesinger R."/>
            <person name="Bueldt G."/>
            <person name="Savopol T."/>
            <person name="Scheidig A.J."/>
            <person name="Klare J.P."/>
            <person name="Engelhard M."/>
        </authorList>
    </citation>
    <scope>X-RAY CRYSTALLOGRAPHY (1.9 ANGSTROMS) OF 23-82</scope>
</reference>
<organism>
    <name type="scientific">Natronomonas pharaonis</name>
    <name type="common">Natronobacterium pharaonis</name>
    <dbReference type="NCBI Taxonomy" id="2257"/>
    <lineage>
        <taxon>Archaea</taxon>
        <taxon>Methanobacteriati</taxon>
        <taxon>Methanobacteriota</taxon>
        <taxon>Stenosarchaea group</taxon>
        <taxon>Halobacteria</taxon>
        <taxon>Halobacteriales</taxon>
        <taxon>Haloarculaceae</taxon>
        <taxon>Natronomonas</taxon>
    </lineage>
</organism>
<proteinExistence type="evidence at protein level"/>
<gene>
    <name type="primary">htr2</name>
    <name type="synonym">htrII</name>
</gene>
<accession>P42259</accession>
<sequence>MSLNVSRLLLPSRVRHSYTGKMGAVFIFVGALTVLFGAIAYGEVTAAAATGDAAAVQEAAVSAILGLIILLGINLGLVAATLGGDTAASLSTLAAKASRMGDGDLDVELETRREDEIGDLYAAFDEMRQSVRTSLEDAKNAREDAEQAQKRAEEINTELQAEAERFGEVMDRCADGDFTQRLDAETDNEAMQSIEGSFNEMMDGIEALVGRIERFADAVSEDAEAVRANAESVMEASEDVNRAVQNISDAAGDQTETVQQIALEMDDVSATTEEVAASADDIAKTARQAAETGEAGRETAETAITEMNEVESRTEQAVASMEELNEDVREIGEVSEMIADIAEQTNILALNASIEAARADGNSEGFAVVADEVKALAEETKAATEEIDDLIGTVQDRTQTTVDDIRETSDQVSEGVETVEDTVDALERIVDSVERTNDGIQEINQSTDAQADAAQKATTMVEDMAATSEQTASDAETAAETTETQAESVKEVFDLIDGLSEQADSLSETLSRTDTEEASAADLDDQPTLAAGDD</sequence>
<protein>
    <recommendedName>
        <fullName>Sensory rhodopsin II transducer</fullName>
    </recommendedName>
    <alternativeName>
        <fullName>HTR-II</fullName>
    </alternativeName>
    <alternativeName>
        <fullName>Methyl-accepting phototaxis protein II</fullName>
        <shortName>MPP-II</shortName>
    </alternativeName>
</protein>